<keyword id="KW-0963">Cytoplasm</keyword>
<keyword id="KW-0342">GTP-binding</keyword>
<keyword id="KW-0378">Hydrolase</keyword>
<keyword id="KW-0547">Nucleotide-binding</keyword>
<keyword id="KW-0687">Ribonucleoprotein</keyword>
<keyword id="KW-0694">RNA-binding</keyword>
<keyword id="KW-0733">Signal recognition particle</keyword>
<name>SRP54_PYRHO</name>
<comment type="function">
    <text evidence="1">Involved in targeting and insertion of nascent membrane proteins into the cytoplasmic membrane. Binds to the hydrophobic signal sequence of the ribosome-nascent chain (RNC) as it emerges from the ribosomes. The SRP-RNC complex is then targeted to the cytoplasmic membrane where it interacts with the SRP receptor FtsY.</text>
</comment>
<comment type="catalytic activity">
    <reaction evidence="1">
        <text>GTP + H2O = GDP + phosphate + H(+)</text>
        <dbReference type="Rhea" id="RHEA:19669"/>
        <dbReference type="ChEBI" id="CHEBI:15377"/>
        <dbReference type="ChEBI" id="CHEBI:15378"/>
        <dbReference type="ChEBI" id="CHEBI:37565"/>
        <dbReference type="ChEBI" id="CHEBI:43474"/>
        <dbReference type="ChEBI" id="CHEBI:58189"/>
        <dbReference type="EC" id="3.6.5.4"/>
    </reaction>
</comment>
<comment type="subunit">
    <text evidence="1">Part of the signal recognition particle protein translocation system, which is composed of SRP and FtsY. Archaeal SRP consists of a 7S RNA molecule of 300 nucleotides and two protein subunits: SRP54 and SRP19.</text>
</comment>
<comment type="subcellular location">
    <subcellularLocation>
        <location evidence="1">Cytoplasm</location>
    </subcellularLocation>
    <text evidence="1">The SRP-RNC complex is targeted to the cytoplasmic membrane.</text>
</comment>
<comment type="domain">
    <text evidence="1">Composed of three domains: the N-terminal N domain, which is responsible for interactions with the ribosome, the central G domain, which binds GTP, and the C-terminal M domain, which binds the RNA and the signal sequence of the RNC.</text>
</comment>
<comment type="similarity">
    <text evidence="1">Belongs to the GTP-binding SRP family. SRP54 subfamily.</text>
</comment>
<comment type="sequence caution" evidence="2">
    <conflict type="erroneous initiation">
        <sequence resource="EMBL-CDS" id="BAA30807"/>
    </conflict>
</comment>
<feature type="chain" id="PRO_0000101184" description="Signal recognition particle 54 kDa protein">
    <location>
        <begin position="1"/>
        <end position="443"/>
    </location>
</feature>
<feature type="binding site" evidence="1">
    <location>
        <begin position="107"/>
        <end position="114"/>
    </location>
    <ligand>
        <name>GTP</name>
        <dbReference type="ChEBI" id="CHEBI:37565"/>
    </ligand>
</feature>
<feature type="binding site" evidence="1">
    <location>
        <begin position="189"/>
        <end position="193"/>
    </location>
    <ligand>
        <name>GTP</name>
        <dbReference type="ChEBI" id="CHEBI:37565"/>
    </ligand>
</feature>
<feature type="binding site" evidence="1">
    <location>
        <begin position="247"/>
        <end position="250"/>
    </location>
    <ligand>
        <name>GTP</name>
        <dbReference type="ChEBI" id="CHEBI:37565"/>
    </ligand>
</feature>
<evidence type="ECO:0000255" key="1">
    <source>
        <dbReference type="HAMAP-Rule" id="MF_00306"/>
    </source>
</evidence>
<evidence type="ECO:0000305" key="2"/>
<protein>
    <recommendedName>
        <fullName evidence="1">Signal recognition particle 54 kDa protein</fullName>
        <shortName evidence="1">SRP54</shortName>
        <ecNumber evidence="1">3.6.5.4</ecNumber>
    </recommendedName>
</protein>
<reference key="1">
    <citation type="journal article" date="1998" name="DNA Res.">
        <title>Complete sequence and gene organization of the genome of a hyper-thermophilic archaebacterium, Pyrococcus horikoshii OT3.</title>
        <authorList>
            <person name="Kawarabayasi Y."/>
            <person name="Sawada M."/>
            <person name="Horikawa H."/>
            <person name="Haikawa Y."/>
            <person name="Hino Y."/>
            <person name="Yamamoto S."/>
            <person name="Sekine M."/>
            <person name="Baba S."/>
            <person name="Kosugi H."/>
            <person name="Hosoyama A."/>
            <person name="Nagai Y."/>
            <person name="Sakai M."/>
            <person name="Ogura K."/>
            <person name="Otsuka R."/>
            <person name="Nakazawa H."/>
            <person name="Takamiya M."/>
            <person name="Ohfuku Y."/>
            <person name="Funahashi T."/>
            <person name="Tanaka T."/>
            <person name="Kudoh Y."/>
            <person name="Yamazaki J."/>
            <person name="Kushida N."/>
            <person name="Oguchi A."/>
            <person name="Aoki K."/>
            <person name="Yoshizawa T."/>
            <person name="Nakamura Y."/>
            <person name="Robb F.T."/>
            <person name="Horikoshi K."/>
            <person name="Masuchi Y."/>
            <person name="Shizuya H."/>
            <person name="Kikuchi H."/>
        </authorList>
    </citation>
    <scope>NUCLEOTIDE SEQUENCE [LARGE SCALE GENOMIC DNA]</scope>
    <source>
        <strain>ATCC 700860 / DSM 12428 / JCM 9974 / NBRC 100139 / OT-3</strain>
    </source>
</reference>
<sequence>MVLDSLGRALSNALKKIARAGSVDEALVKEVVRDIQRALLQADVNVRLVLKLTKEIQRRALEEKPPAGISKKEHIIKIVYEELTKFLGTEAKPIEIKEKPTVLLTVGVQGSGKTTTVAKLARYFQKRGYKVGVVCSDTWRPGAYHQLKQLLDPYHIEVFGDPNEKDAVKLAKEGVEYFKTRDVDLIIVDTAGRHKEEKDLIEEMRMISEEIRPHEVILVIDGTIGQQAYNQALAFKEATPIGSIIVTKLDSSAKGGGALSAVAATGAPIKFIGVGEKIDDLEPFDPARFVSRLLGLGDIQGLLEKFKELEKEVEFTEEDIDRFLRGKFTLKDMYAQLEAMRKMGPLKQILRMIPGLGYSLPDELISVGEERLRKFKVIMDSMTEEELMNPEIINYSRIKRIARGSGTSIKDVKELLTQYNQMKKFFKSMNKRQLSRLARRFGM</sequence>
<accession>O59307</accession>
<proteinExistence type="inferred from homology"/>
<organism>
    <name type="scientific">Pyrococcus horikoshii (strain ATCC 700860 / DSM 12428 / JCM 9974 / NBRC 100139 / OT-3)</name>
    <dbReference type="NCBI Taxonomy" id="70601"/>
    <lineage>
        <taxon>Archaea</taxon>
        <taxon>Methanobacteriati</taxon>
        <taxon>Methanobacteriota</taxon>
        <taxon>Thermococci</taxon>
        <taxon>Thermococcales</taxon>
        <taxon>Thermococcaceae</taxon>
        <taxon>Pyrococcus</taxon>
    </lineage>
</organism>
<dbReference type="EC" id="3.6.5.4" evidence="1"/>
<dbReference type="EMBL" id="BA000001">
    <property type="protein sequence ID" value="BAA30807.1"/>
    <property type="status" value="ALT_INIT"/>
    <property type="molecule type" value="Genomic_DNA"/>
</dbReference>
<dbReference type="PIR" id="H71176">
    <property type="entry name" value="H71176"/>
</dbReference>
<dbReference type="RefSeq" id="WP_048053459.1">
    <property type="nucleotide sequence ID" value="NC_000961.1"/>
</dbReference>
<dbReference type="SMR" id="O59307"/>
<dbReference type="STRING" id="70601.gene:9378689"/>
<dbReference type="EnsemblBacteria" id="BAA30807">
    <property type="protein sequence ID" value="BAA30807"/>
    <property type="gene ID" value="BAA30807"/>
</dbReference>
<dbReference type="GeneID" id="1442540"/>
<dbReference type="KEGG" id="pho:PH1694"/>
<dbReference type="eggNOG" id="arCOG01228">
    <property type="taxonomic scope" value="Archaea"/>
</dbReference>
<dbReference type="OrthoDB" id="52849at2157"/>
<dbReference type="Proteomes" id="UP000000752">
    <property type="component" value="Chromosome"/>
</dbReference>
<dbReference type="GO" id="GO:0048500">
    <property type="term" value="C:signal recognition particle"/>
    <property type="evidence" value="ECO:0007669"/>
    <property type="project" value="UniProtKB-UniRule"/>
</dbReference>
<dbReference type="GO" id="GO:0008312">
    <property type="term" value="F:7S RNA binding"/>
    <property type="evidence" value="ECO:0007669"/>
    <property type="project" value="UniProtKB-UniRule"/>
</dbReference>
<dbReference type="GO" id="GO:0016887">
    <property type="term" value="F:ATP hydrolysis activity"/>
    <property type="evidence" value="ECO:0007669"/>
    <property type="project" value="InterPro"/>
</dbReference>
<dbReference type="GO" id="GO:0005525">
    <property type="term" value="F:GTP binding"/>
    <property type="evidence" value="ECO:0007669"/>
    <property type="project" value="UniProtKB-UniRule"/>
</dbReference>
<dbReference type="GO" id="GO:0003924">
    <property type="term" value="F:GTPase activity"/>
    <property type="evidence" value="ECO:0007669"/>
    <property type="project" value="UniProtKB-UniRule"/>
</dbReference>
<dbReference type="GO" id="GO:0006614">
    <property type="term" value="P:SRP-dependent cotranslational protein targeting to membrane"/>
    <property type="evidence" value="ECO:0007669"/>
    <property type="project" value="InterPro"/>
</dbReference>
<dbReference type="CDD" id="cd17875">
    <property type="entry name" value="SRP54_G"/>
    <property type="match status" value="1"/>
</dbReference>
<dbReference type="FunFam" id="3.40.50.300:FF:000022">
    <property type="entry name" value="Signal recognition particle 54 kDa subunit"/>
    <property type="match status" value="1"/>
</dbReference>
<dbReference type="Gene3D" id="3.40.50.300">
    <property type="entry name" value="P-loop containing nucleotide triphosphate hydrolases"/>
    <property type="match status" value="1"/>
</dbReference>
<dbReference type="Gene3D" id="1.20.120.140">
    <property type="entry name" value="Signal recognition particle SRP54, nucleotide-binding domain"/>
    <property type="match status" value="1"/>
</dbReference>
<dbReference type="Gene3D" id="1.10.260.30">
    <property type="entry name" value="Signal recognition particle, SRP54 subunit, M-domain"/>
    <property type="match status" value="1"/>
</dbReference>
<dbReference type="HAMAP" id="MF_00306">
    <property type="entry name" value="SRP54"/>
    <property type="match status" value="1"/>
</dbReference>
<dbReference type="InterPro" id="IPR003593">
    <property type="entry name" value="AAA+_ATPase"/>
</dbReference>
<dbReference type="InterPro" id="IPR027417">
    <property type="entry name" value="P-loop_NTPase"/>
</dbReference>
<dbReference type="InterPro" id="IPR036891">
    <property type="entry name" value="Signal_recog_part_SRP54_M_sf"/>
</dbReference>
<dbReference type="InterPro" id="IPR013822">
    <property type="entry name" value="Signal_recog_particl_SRP54_hlx"/>
</dbReference>
<dbReference type="InterPro" id="IPR004125">
    <property type="entry name" value="Signal_recog_particle_SRP54_M"/>
</dbReference>
<dbReference type="InterPro" id="IPR036225">
    <property type="entry name" value="SRP/SRP_N"/>
</dbReference>
<dbReference type="InterPro" id="IPR022941">
    <property type="entry name" value="SRP54"/>
</dbReference>
<dbReference type="InterPro" id="IPR000897">
    <property type="entry name" value="SRP54_GTPase_dom"/>
</dbReference>
<dbReference type="InterPro" id="IPR042101">
    <property type="entry name" value="SRP54_N_sf"/>
</dbReference>
<dbReference type="PANTHER" id="PTHR11564">
    <property type="entry name" value="SIGNAL RECOGNITION PARTICLE 54K PROTEIN SRP54"/>
    <property type="match status" value="1"/>
</dbReference>
<dbReference type="PANTHER" id="PTHR11564:SF5">
    <property type="entry name" value="SIGNAL RECOGNITION PARTICLE SUBUNIT SRP54"/>
    <property type="match status" value="1"/>
</dbReference>
<dbReference type="Pfam" id="PF00448">
    <property type="entry name" value="SRP54"/>
    <property type="match status" value="1"/>
</dbReference>
<dbReference type="Pfam" id="PF02881">
    <property type="entry name" value="SRP54_N"/>
    <property type="match status" value="1"/>
</dbReference>
<dbReference type="Pfam" id="PF02978">
    <property type="entry name" value="SRP_SPB"/>
    <property type="match status" value="1"/>
</dbReference>
<dbReference type="SMART" id="SM00382">
    <property type="entry name" value="AAA"/>
    <property type="match status" value="1"/>
</dbReference>
<dbReference type="SMART" id="SM00962">
    <property type="entry name" value="SRP54"/>
    <property type="match status" value="1"/>
</dbReference>
<dbReference type="SMART" id="SM00963">
    <property type="entry name" value="SRP54_N"/>
    <property type="match status" value="1"/>
</dbReference>
<dbReference type="SUPFAM" id="SSF47364">
    <property type="entry name" value="Domain of the SRP/SRP receptor G-proteins"/>
    <property type="match status" value="1"/>
</dbReference>
<dbReference type="SUPFAM" id="SSF52540">
    <property type="entry name" value="P-loop containing nucleoside triphosphate hydrolases"/>
    <property type="match status" value="1"/>
</dbReference>
<dbReference type="SUPFAM" id="SSF47446">
    <property type="entry name" value="Signal peptide-binding domain"/>
    <property type="match status" value="1"/>
</dbReference>
<dbReference type="PROSITE" id="PS00300">
    <property type="entry name" value="SRP54"/>
    <property type="match status" value="1"/>
</dbReference>
<gene>
    <name evidence="1" type="primary">srp54</name>
    <name type="ordered locus">PH1694</name>
</gene>